<dbReference type="EC" id="3.6.1.66" evidence="1"/>
<dbReference type="EMBL" id="CP000009">
    <property type="protein sequence ID" value="AAW61042.1"/>
    <property type="molecule type" value="Genomic_DNA"/>
</dbReference>
<dbReference type="SMR" id="Q5FRF4"/>
<dbReference type="STRING" id="290633.GOX1281"/>
<dbReference type="KEGG" id="gox:GOX1281"/>
<dbReference type="eggNOG" id="COG0127">
    <property type="taxonomic scope" value="Bacteria"/>
</dbReference>
<dbReference type="HOGENOM" id="CLU_082080_0_0_5"/>
<dbReference type="Proteomes" id="UP000006375">
    <property type="component" value="Chromosome"/>
</dbReference>
<dbReference type="GO" id="GO:0005829">
    <property type="term" value="C:cytosol"/>
    <property type="evidence" value="ECO:0007669"/>
    <property type="project" value="TreeGrafter"/>
</dbReference>
<dbReference type="GO" id="GO:0035870">
    <property type="term" value="F:dITP diphosphatase activity"/>
    <property type="evidence" value="ECO:0007669"/>
    <property type="project" value="RHEA"/>
</dbReference>
<dbReference type="GO" id="GO:0036220">
    <property type="term" value="F:ITP diphosphatase activity"/>
    <property type="evidence" value="ECO:0007669"/>
    <property type="project" value="UniProtKB-EC"/>
</dbReference>
<dbReference type="GO" id="GO:0046872">
    <property type="term" value="F:metal ion binding"/>
    <property type="evidence" value="ECO:0007669"/>
    <property type="project" value="UniProtKB-KW"/>
</dbReference>
<dbReference type="GO" id="GO:0000166">
    <property type="term" value="F:nucleotide binding"/>
    <property type="evidence" value="ECO:0007669"/>
    <property type="project" value="UniProtKB-KW"/>
</dbReference>
<dbReference type="GO" id="GO:0017111">
    <property type="term" value="F:ribonucleoside triphosphate phosphatase activity"/>
    <property type="evidence" value="ECO:0007669"/>
    <property type="project" value="InterPro"/>
</dbReference>
<dbReference type="GO" id="GO:0036222">
    <property type="term" value="F:XTP diphosphatase activity"/>
    <property type="evidence" value="ECO:0007669"/>
    <property type="project" value="RHEA"/>
</dbReference>
<dbReference type="GO" id="GO:0009117">
    <property type="term" value="P:nucleotide metabolic process"/>
    <property type="evidence" value="ECO:0007669"/>
    <property type="project" value="UniProtKB-KW"/>
</dbReference>
<dbReference type="GO" id="GO:0009146">
    <property type="term" value="P:purine nucleoside triphosphate catabolic process"/>
    <property type="evidence" value="ECO:0007669"/>
    <property type="project" value="UniProtKB-UniRule"/>
</dbReference>
<dbReference type="CDD" id="cd00515">
    <property type="entry name" value="HAM1"/>
    <property type="match status" value="1"/>
</dbReference>
<dbReference type="FunFam" id="3.90.950.10:FF:000001">
    <property type="entry name" value="dITP/XTP pyrophosphatase"/>
    <property type="match status" value="1"/>
</dbReference>
<dbReference type="Gene3D" id="3.90.950.10">
    <property type="match status" value="1"/>
</dbReference>
<dbReference type="HAMAP" id="MF_01405">
    <property type="entry name" value="Non_canon_purine_NTPase"/>
    <property type="match status" value="1"/>
</dbReference>
<dbReference type="InterPro" id="IPR020922">
    <property type="entry name" value="dITP/XTP_pyrophosphatase"/>
</dbReference>
<dbReference type="InterPro" id="IPR029001">
    <property type="entry name" value="ITPase-like_fam"/>
</dbReference>
<dbReference type="InterPro" id="IPR002637">
    <property type="entry name" value="RdgB/HAM1"/>
</dbReference>
<dbReference type="NCBIfam" id="TIGR00042">
    <property type="entry name" value="RdgB/HAM1 family non-canonical purine NTP pyrophosphatase"/>
    <property type="match status" value="1"/>
</dbReference>
<dbReference type="PANTHER" id="PTHR11067:SF9">
    <property type="entry name" value="INOSINE TRIPHOSPHATE PYROPHOSPHATASE"/>
    <property type="match status" value="1"/>
</dbReference>
<dbReference type="PANTHER" id="PTHR11067">
    <property type="entry name" value="INOSINE TRIPHOSPHATE PYROPHOSPHATASE/HAM1 PROTEIN"/>
    <property type="match status" value="1"/>
</dbReference>
<dbReference type="Pfam" id="PF01725">
    <property type="entry name" value="Ham1p_like"/>
    <property type="match status" value="1"/>
</dbReference>
<dbReference type="SUPFAM" id="SSF52972">
    <property type="entry name" value="ITPase-like"/>
    <property type="match status" value="1"/>
</dbReference>
<protein>
    <recommendedName>
        <fullName evidence="1">dITP/XTP pyrophosphatase</fullName>
        <ecNumber evidence="1">3.6.1.66</ecNumber>
    </recommendedName>
    <alternativeName>
        <fullName evidence="1">Non-canonical purine NTP pyrophosphatase</fullName>
    </alternativeName>
    <alternativeName>
        <fullName evidence="1">Non-standard purine NTP pyrophosphatase</fullName>
    </alternativeName>
    <alternativeName>
        <fullName evidence="1">Nucleoside-triphosphate diphosphatase</fullName>
    </alternativeName>
    <alternativeName>
        <fullName evidence="1">Nucleoside-triphosphate pyrophosphatase</fullName>
        <shortName evidence="1">NTPase</shortName>
    </alternativeName>
</protein>
<proteinExistence type="inferred from homology"/>
<evidence type="ECO:0000255" key="1">
    <source>
        <dbReference type="HAMAP-Rule" id="MF_01405"/>
    </source>
</evidence>
<keyword id="KW-0378">Hydrolase</keyword>
<keyword id="KW-0460">Magnesium</keyword>
<keyword id="KW-0479">Metal-binding</keyword>
<keyword id="KW-0546">Nucleotide metabolism</keyword>
<keyword id="KW-0547">Nucleotide-binding</keyword>
<keyword id="KW-1185">Reference proteome</keyword>
<sequence length="208" mass="22462">MMRKLSPGSKIVLASHNAGKLREFSTLLAESGITVISAAELDLPEPEETEETFTGNAAIKALAAARASGLPALADDSGFCVSALDNRPGVYSARWGGPTKDMQVAMERVHREMGDNPDQRAFFVAALCLAWPDGETRTVQGECHGTVVWPPRGDHGHGYDPMFVPEGESRTFAEMSEAEKNAVSHRGRALTAFLNTCLDTSTQKTERK</sequence>
<organism>
    <name type="scientific">Gluconobacter oxydans (strain 621H)</name>
    <name type="common">Gluconobacter suboxydans</name>
    <dbReference type="NCBI Taxonomy" id="290633"/>
    <lineage>
        <taxon>Bacteria</taxon>
        <taxon>Pseudomonadati</taxon>
        <taxon>Pseudomonadota</taxon>
        <taxon>Alphaproteobacteria</taxon>
        <taxon>Acetobacterales</taxon>
        <taxon>Acetobacteraceae</taxon>
        <taxon>Gluconobacter</taxon>
    </lineage>
</organism>
<accession>Q5FRF4</accession>
<reference key="1">
    <citation type="journal article" date="2005" name="Nat. Biotechnol.">
        <title>Complete genome sequence of the acetic acid bacterium Gluconobacter oxydans.</title>
        <authorList>
            <person name="Prust C."/>
            <person name="Hoffmeister M."/>
            <person name="Liesegang H."/>
            <person name="Wiezer A."/>
            <person name="Fricke W.F."/>
            <person name="Ehrenreich A."/>
            <person name="Gottschalk G."/>
            <person name="Deppenmeier U."/>
        </authorList>
    </citation>
    <scope>NUCLEOTIDE SEQUENCE [LARGE SCALE GENOMIC DNA]</scope>
    <source>
        <strain>621H</strain>
    </source>
</reference>
<name>IXTPA_GLUOX</name>
<comment type="function">
    <text evidence="1">Pyrophosphatase that catalyzes the hydrolysis of nucleoside triphosphates to their monophosphate derivatives, with a high preference for the non-canonical purine nucleotides XTP (xanthosine triphosphate), dITP (deoxyinosine triphosphate) and ITP. Seems to function as a house-cleaning enzyme that removes non-canonical purine nucleotides from the nucleotide pool, thus preventing their incorporation into DNA/RNA and avoiding chromosomal lesions.</text>
</comment>
<comment type="catalytic activity">
    <reaction evidence="1">
        <text>XTP + H2O = XMP + diphosphate + H(+)</text>
        <dbReference type="Rhea" id="RHEA:28610"/>
        <dbReference type="ChEBI" id="CHEBI:15377"/>
        <dbReference type="ChEBI" id="CHEBI:15378"/>
        <dbReference type="ChEBI" id="CHEBI:33019"/>
        <dbReference type="ChEBI" id="CHEBI:57464"/>
        <dbReference type="ChEBI" id="CHEBI:61314"/>
        <dbReference type="EC" id="3.6.1.66"/>
    </reaction>
</comment>
<comment type="catalytic activity">
    <reaction evidence="1">
        <text>dITP + H2O = dIMP + diphosphate + H(+)</text>
        <dbReference type="Rhea" id="RHEA:28342"/>
        <dbReference type="ChEBI" id="CHEBI:15377"/>
        <dbReference type="ChEBI" id="CHEBI:15378"/>
        <dbReference type="ChEBI" id="CHEBI:33019"/>
        <dbReference type="ChEBI" id="CHEBI:61194"/>
        <dbReference type="ChEBI" id="CHEBI:61382"/>
        <dbReference type="EC" id="3.6.1.66"/>
    </reaction>
</comment>
<comment type="catalytic activity">
    <reaction evidence="1">
        <text>ITP + H2O = IMP + diphosphate + H(+)</text>
        <dbReference type="Rhea" id="RHEA:29399"/>
        <dbReference type="ChEBI" id="CHEBI:15377"/>
        <dbReference type="ChEBI" id="CHEBI:15378"/>
        <dbReference type="ChEBI" id="CHEBI:33019"/>
        <dbReference type="ChEBI" id="CHEBI:58053"/>
        <dbReference type="ChEBI" id="CHEBI:61402"/>
        <dbReference type="EC" id="3.6.1.66"/>
    </reaction>
</comment>
<comment type="cofactor">
    <cofactor evidence="1">
        <name>Mg(2+)</name>
        <dbReference type="ChEBI" id="CHEBI:18420"/>
    </cofactor>
    <text evidence="1">Binds 1 Mg(2+) ion per subunit.</text>
</comment>
<comment type="subunit">
    <text evidence="1">Homodimer.</text>
</comment>
<comment type="similarity">
    <text evidence="1">Belongs to the HAM1 NTPase family.</text>
</comment>
<feature type="chain" id="PRO_0000178172" description="dITP/XTP pyrophosphatase">
    <location>
        <begin position="1"/>
        <end position="208"/>
    </location>
</feature>
<feature type="active site" description="Proton acceptor" evidence="1">
    <location>
        <position position="76"/>
    </location>
</feature>
<feature type="binding site" evidence="1">
    <location>
        <begin position="15"/>
        <end position="20"/>
    </location>
    <ligand>
        <name>substrate</name>
    </ligand>
</feature>
<feature type="binding site" evidence="1">
    <location>
        <position position="47"/>
    </location>
    <ligand>
        <name>Mg(2+)</name>
        <dbReference type="ChEBI" id="CHEBI:18420"/>
    </ligand>
</feature>
<feature type="binding site" evidence="1">
    <location>
        <position position="76"/>
    </location>
    <ligand>
        <name>Mg(2+)</name>
        <dbReference type="ChEBI" id="CHEBI:18420"/>
    </ligand>
</feature>
<feature type="binding site" evidence="1">
    <location>
        <position position="77"/>
    </location>
    <ligand>
        <name>substrate</name>
    </ligand>
</feature>
<feature type="binding site" evidence="1">
    <location>
        <begin position="157"/>
        <end position="160"/>
    </location>
    <ligand>
        <name>substrate</name>
    </ligand>
</feature>
<feature type="binding site" evidence="1">
    <location>
        <position position="180"/>
    </location>
    <ligand>
        <name>substrate</name>
    </ligand>
</feature>
<feature type="binding site" evidence="1">
    <location>
        <begin position="185"/>
        <end position="186"/>
    </location>
    <ligand>
        <name>substrate</name>
    </ligand>
</feature>
<gene>
    <name type="ordered locus">GOX1281</name>
</gene>